<proteinExistence type="inferred from homology"/>
<reference key="1">
    <citation type="submission" date="2007-03" db="EMBL/GenBank/DDBJ databases">
        <title>Complete sequence of Shewanella loihica PV-4.</title>
        <authorList>
            <consortium name="US DOE Joint Genome Institute"/>
            <person name="Copeland A."/>
            <person name="Lucas S."/>
            <person name="Lapidus A."/>
            <person name="Barry K."/>
            <person name="Detter J.C."/>
            <person name="Glavina del Rio T."/>
            <person name="Hammon N."/>
            <person name="Israni S."/>
            <person name="Dalin E."/>
            <person name="Tice H."/>
            <person name="Pitluck S."/>
            <person name="Chain P."/>
            <person name="Malfatti S."/>
            <person name="Shin M."/>
            <person name="Vergez L."/>
            <person name="Schmutz J."/>
            <person name="Larimer F."/>
            <person name="Land M."/>
            <person name="Hauser L."/>
            <person name="Kyrpides N."/>
            <person name="Mikhailova N."/>
            <person name="Romine M.F."/>
            <person name="Serres G."/>
            <person name="Fredrickson J."/>
            <person name="Tiedje J."/>
            <person name="Richardson P."/>
        </authorList>
    </citation>
    <scope>NUCLEOTIDE SEQUENCE [LARGE SCALE GENOMIC DNA]</scope>
    <source>
        <strain>ATCC BAA-1088 / PV-4</strain>
    </source>
</reference>
<comment type="function">
    <text evidence="1">Binds directly to 23S rRNA. The L1 stalk is quite mobile in the ribosome, and is involved in E site tRNA release.</text>
</comment>
<comment type="function">
    <text evidence="1">Protein L1 is also a translational repressor protein, it controls the translation of the L11 operon by binding to its mRNA.</text>
</comment>
<comment type="subunit">
    <text evidence="1">Part of the 50S ribosomal subunit.</text>
</comment>
<comment type="similarity">
    <text evidence="1">Belongs to the universal ribosomal protein uL1 family.</text>
</comment>
<protein>
    <recommendedName>
        <fullName evidence="1">Large ribosomal subunit protein uL1</fullName>
    </recommendedName>
    <alternativeName>
        <fullName evidence="2">50S ribosomal protein L1</fullName>
    </alternativeName>
</protein>
<gene>
    <name evidence="1" type="primary">rplA</name>
    <name type="ordered locus">Shew_0148</name>
</gene>
<organism>
    <name type="scientific">Shewanella loihica (strain ATCC BAA-1088 / PV-4)</name>
    <dbReference type="NCBI Taxonomy" id="323850"/>
    <lineage>
        <taxon>Bacteria</taxon>
        <taxon>Pseudomonadati</taxon>
        <taxon>Pseudomonadota</taxon>
        <taxon>Gammaproteobacteria</taxon>
        <taxon>Alteromonadales</taxon>
        <taxon>Shewanellaceae</taxon>
        <taxon>Shewanella</taxon>
    </lineage>
</organism>
<evidence type="ECO:0000255" key="1">
    <source>
        <dbReference type="HAMAP-Rule" id="MF_01318"/>
    </source>
</evidence>
<evidence type="ECO:0000305" key="2"/>
<sequence>MAKLTKRARLIREKVEATKSYDINEAVALLKELATAKFVESVDVAVNLGVDPRKSDQNVRGATVLPHGTGREVRVAVFTQGANADAAKEAGAELVGMDELAAQVKAGEMNFDVVIASPDAMRVVGQLGQILGPRGLMPNPKTGTVTPNVAEAVKNAKAGQVRYRNDKNGIIHTTIGKVDFEPVQLKENLDALLGALIKAKPAAAKGVFVKKVSISTTMGAGVAVDQSTLNPTA</sequence>
<name>RL1_SHELP</name>
<dbReference type="EMBL" id="CP000606">
    <property type="protein sequence ID" value="ABO22020.1"/>
    <property type="molecule type" value="Genomic_DNA"/>
</dbReference>
<dbReference type="RefSeq" id="WP_011863957.1">
    <property type="nucleotide sequence ID" value="NC_009092.1"/>
</dbReference>
<dbReference type="SMR" id="A3Q972"/>
<dbReference type="STRING" id="323850.Shew_0148"/>
<dbReference type="KEGG" id="slo:Shew_0148"/>
<dbReference type="eggNOG" id="COG0081">
    <property type="taxonomic scope" value="Bacteria"/>
</dbReference>
<dbReference type="HOGENOM" id="CLU_062853_0_0_6"/>
<dbReference type="OrthoDB" id="9803740at2"/>
<dbReference type="Proteomes" id="UP000001558">
    <property type="component" value="Chromosome"/>
</dbReference>
<dbReference type="GO" id="GO:0022625">
    <property type="term" value="C:cytosolic large ribosomal subunit"/>
    <property type="evidence" value="ECO:0007669"/>
    <property type="project" value="TreeGrafter"/>
</dbReference>
<dbReference type="GO" id="GO:0019843">
    <property type="term" value="F:rRNA binding"/>
    <property type="evidence" value="ECO:0007669"/>
    <property type="project" value="UniProtKB-UniRule"/>
</dbReference>
<dbReference type="GO" id="GO:0003735">
    <property type="term" value="F:structural constituent of ribosome"/>
    <property type="evidence" value="ECO:0007669"/>
    <property type="project" value="InterPro"/>
</dbReference>
<dbReference type="GO" id="GO:0000049">
    <property type="term" value="F:tRNA binding"/>
    <property type="evidence" value="ECO:0007669"/>
    <property type="project" value="UniProtKB-KW"/>
</dbReference>
<dbReference type="GO" id="GO:0006417">
    <property type="term" value="P:regulation of translation"/>
    <property type="evidence" value="ECO:0007669"/>
    <property type="project" value="UniProtKB-KW"/>
</dbReference>
<dbReference type="GO" id="GO:0006412">
    <property type="term" value="P:translation"/>
    <property type="evidence" value="ECO:0007669"/>
    <property type="project" value="UniProtKB-UniRule"/>
</dbReference>
<dbReference type="CDD" id="cd00403">
    <property type="entry name" value="Ribosomal_L1"/>
    <property type="match status" value="1"/>
</dbReference>
<dbReference type="FunFam" id="3.40.50.790:FF:000001">
    <property type="entry name" value="50S ribosomal protein L1"/>
    <property type="match status" value="1"/>
</dbReference>
<dbReference type="Gene3D" id="3.30.190.20">
    <property type="match status" value="1"/>
</dbReference>
<dbReference type="Gene3D" id="3.40.50.790">
    <property type="match status" value="1"/>
</dbReference>
<dbReference type="HAMAP" id="MF_01318_B">
    <property type="entry name" value="Ribosomal_uL1_B"/>
    <property type="match status" value="1"/>
</dbReference>
<dbReference type="InterPro" id="IPR005878">
    <property type="entry name" value="Ribosom_uL1_bac-type"/>
</dbReference>
<dbReference type="InterPro" id="IPR002143">
    <property type="entry name" value="Ribosomal_uL1"/>
</dbReference>
<dbReference type="InterPro" id="IPR023674">
    <property type="entry name" value="Ribosomal_uL1-like"/>
</dbReference>
<dbReference type="InterPro" id="IPR028364">
    <property type="entry name" value="Ribosomal_uL1/biogenesis"/>
</dbReference>
<dbReference type="InterPro" id="IPR016095">
    <property type="entry name" value="Ribosomal_uL1_3-a/b-sand"/>
</dbReference>
<dbReference type="InterPro" id="IPR023673">
    <property type="entry name" value="Ribosomal_uL1_CS"/>
</dbReference>
<dbReference type="NCBIfam" id="TIGR01169">
    <property type="entry name" value="rplA_bact"/>
    <property type="match status" value="1"/>
</dbReference>
<dbReference type="PANTHER" id="PTHR36427">
    <property type="entry name" value="54S RIBOSOMAL PROTEIN L1, MITOCHONDRIAL"/>
    <property type="match status" value="1"/>
</dbReference>
<dbReference type="PANTHER" id="PTHR36427:SF3">
    <property type="entry name" value="LARGE RIBOSOMAL SUBUNIT PROTEIN UL1M"/>
    <property type="match status" value="1"/>
</dbReference>
<dbReference type="Pfam" id="PF00687">
    <property type="entry name" value="Ribosomal_L1"/>
    <property type="match status" value="1"/>
</dbReference>
<dbReference type="PIRSF" id="PIRSF002155">
    <property type="entry name" value="Ribosomal_L1"/>
    <property type="match status" value="1"/>
</dbReference>
<dbReference type="SUPFAM" id="SSF56808">
    <property type="entry name" value="Ribosomal protein L1"/>
    <property type="match status" value="1"/>
</dbReference>
<dbReference type="PROSITE" id="PS01199">
    <property type="entry name" value="RIBOSOMAL_L1"/>
    <property type="match status" value="1"/>
</dbReference>
<feature type="chain" id="PRO_0000308101" description="Large ribosomal subunit protein uL1">
    <location>
        <begin position="1"/>
        <end position="233"/>
    </location>
</feature>
<keyword id="KW-1185">Reference proteome</keyword>
<keyword id="KW-0678">Repressor</keyword>
<keyword id="KW-0687">Ribonucleoprotein</keyword>
<keyword id="KW-0689">Ribosomal protein</keyword>
<keyword id="KW-0694">RNA-binding</keyword>
<keyword id="KW-0699">rRNA-binding</keyword>
<keyword id="KW-0810">Translation regulation</keyword>
<keyword id="KW-0820">tRNA-binding</keyword>
<accession>A3Q972</accession>